<dbReference type="EMBL" id="BA000039">
    <property type="protein sequence ID" value="BAC09964.1"/>
    <property type="molecule type" value="Genomic_DNA"/>
</dbReference>
<dbReference type="RefSeq" id="NP_683202.1">
    <property type="nucleotide sequence ID" value="NC_004113.1"/>
</dbReference>
<dbReference type="RefSeq" id="WP_011058244.1">
    <property type="nucleotide sequence ID" value="NC_004113.1"/>
</dbReference>
<dbReference type="PDB" id="1JB0">
    <property type="method" value="X-ray"/>
    <property type="resolution" value="2.50 A"/>
    <property type="chains" value="J=1-41"/>
</dbReference>
<dbReference type="PDB" id="2PPS">
    <property type="method" value="X-ray"/>
    <property type="resolution" value="4.00 A"/>
</dbReference>
<dbReference type="PDB" id="3PCQ">
    <property type="method" value="X-ray"/>
    <property type="resolution" value="8.98 A"/>
    <property type="chains" value="J=1-41"/>
</dbReference>
<dbReference type="PDB" id="4FE1">
    <property type="method" value="X-ray"/>
    <property type="resolution" value="4.92 A"/>
    <property type="chains" value="J=1-41"/>
</dbReference>
<dbReference type="PDB" id="5ZF0">
    <property type="method" value="X-ray"/>
    <property type="resolution" value="4.20 A"/>
    <property type="chains" value="J1/J2/J3/J4/J5/J6=1-41"/>
</dbReference>
<dbReference type="PDB" id="6LU1">
    <property type="method" value="EM"/>
    <property type="resolution" value="3.20 A"/>
    <property type="chains" value="J=1-41"/>
</dbReference>
<dbReference type="PDB" id="6PFY">
    <property type="method" value="X-ray"/>
    <property type="resolution" value="2.90 A"/>
    <property type="chains" value="J/S/f=1-41"/>
</dbReference>
<dbReference type="PDB" id="6PGK">
    <property type="method" value="X-ray"/>
    <property type="resolution" value="2.90 A"/>
    <property type="chains" value="J/S/f=1-41"/>
</dbReference>
<dbReference type="PDB" id="6TRA">
    <property type="method" value="EM"/>
    <property type="resolution" value="2.85 A"/>
    <property type="chains" value="J=1-41"/>
</dbReference>
<dbReference type="PDB" id="6TRC">
    <property type="method" value="EM"/>
    <property type="resolution" value="2.98 A"/>
    <property type="chains" value="8/J/j=1-41"/>
</dbReference>
<dbReference type="PDB" id="6TRD">
    <property type="method" value="EM"/>
    <property type="resolution" value="3.16 A"/>
    <property type="chains" value="8/J/j=1-41"/>
</dbReference>
<dbReference type="PDB" id="7BW2">
    <property type="method" value="X-ray"/>
    <property type="resolution" value="6.50 A"/>
    <property type="chains" value="J=1-41"/>
</dbReference>
<dbReference type="PDB" id="7FIX">
    <property type="method" value="EM"/>
    <property type="resolution" value="1.97 A"/>
    <property type="chains" value="J1/J2/J3=1-41"/>
</dbReference>
<dbReference type="PDB" id="7M75">
    <property type="method" value="X-ray"/>
    <property type="resolution" value="2.75 A"/>
    <property type="chains" value="J=1-41"/>
</dbReference>
<dbReference type="PDB" id="7M76">
    <property type="method" value="X-ray"/>
    <property type="resolution" value="3.00 A"/>
    <property type="chains" value="J=1-41"/>
</dbReference>
<dbReference type="PDB" id="7M78">
    <property type="method" value="X-ray"/>
    <property type="resolution" value="3.00 A"/>
    <property type="chains" value="J=1-41"/>
</dbReference>
<dbReference type="PDBsum" id="1JB0"/>
<dbReference type="PDBsum" id="2PPS"/>
<dbReference type="PDBsum" id="3PCQ"/>
<dbReference type="PDBsum" id="4FE1"/>
<dbReference type="PDBsum" id="5ZF0"/>
<dbReference type="PDBsum" id="6LU1"/>
<dbReference type="PDBsum" id="6PFY"/>
<dbReference type="PDBsum" id="6PGK"/>
<dbReference type="PDBsum" id="6TRA"/>
<dbReference type="PDBsum" id="6TRC"/>
<dbReference type="PDBsum" id="6TRD"/>
<dbReference type="PDBsum" id="7BW2"/>
<dbReference type="PDBsum" id="7FIX"/>
<dbReference type="PDBsum" id="7M75"/>
<dbReference type="PDBsum" id="7M76"/>
<dbReference type="PDBsum" id="7M78"/>
<dbReference type="EMDB" id="EMD-0977"/>
<dbReference type="EMDB" id="EMD-10557"/>
<dbReference type="EMDB" id="EMD-10558"/>
<dbReference type="EMDB" id="EMD-10559"/>
<dbReference type="EMDB" id="EMD-31605"/>
<dbReference type="SMR" id="P0A429"/>
<dbReference type="IntAct" id="P0A429">
    <property type="interactions" value="1"/>
</dbReference>
<dbReference type="STRING" id="197221.gene:10749032"/>
<dbReference type="EnsemblBacteria" id="BAC09964">
    <property type="protein sequence ID" value="BAC09964"/>
    <property type="gene ID" value="BAC09964"/>
</dbReference>
<dbReference type="KEGG" id="tel:tsr2412"/>
<dbReference type="PATRIC" id="fig|197221.4.peg.2535"/>
<dbReference type="eggNOG" id="ENOG5033A5A">
    <property type="taxonomic scope" value="Bacteria"/>
</dbReference>
<dbReference type="EvolutionaryTrace" id="P0A429"/>
<dbReference type="Proteomes" id="UP000000440">
    <property type="component" value="Chromosome"/>
</dbReference>
<dbReference type="GO" id="GO:0009522">
    <property type="term" value="C:photosystem I"/>
    <property type="evidence" value="ECO:0007669"/>
    <property type="project" value="UniProtKB-KW"/>
</dbReference>
<dbReference type="GO" id="GO:0031676">
    <property type="term" value="C:plasma membrane-derived thylakoid membrane"/>
    <property type="evidence" value="ECO:0007669"/>
    <property type="project" value="UniProtKB-SubCell"/>
</dbReference>
<dbReference type="GO" id="GO:0015979">
    <property type="term" value="P:photosynthesis"/>
    <property type="evidence" value="ECO:0007669"/>
    <property type="project" value="UniProtKB-UniRule"/>
</dbReference>
<dbReference type="Gene3D" id="1.20.5.510">
    <property type="entry name" value="Single helix bin"/>
    <property type="match status" value="1"/>
</dbReference>
<dbReference type="HAMAP" id="MF_00522">
    <property type="entry name" value="PSI_PsaJ"/>
    <property type="match status" value="1"/>
</dbReference>
<dbReference type="InterPro" id="IPR002615">
    <property type="entry name" value="PSI_PsaJ"/>
</dbReference>
<dbReference type="InterPro" id="IPR036062">
    <property type="entry name" value="PSI_PsaJ_sf"/>
</dbReference>
<dbReference type="NCBIfam" id="NF002743">
    <property type="entry name" value="PRK02733.1"/>
    <property type="match status" value="1"/>
</dbReference>
<dbReference type="PANTHER" id="PTHR36082">
    <property type="match status" value="1"/>
</dbReference>
<dbReference type="PANTHER" id="PTHR36082:SF2">
    <property type="entry name" value="PHOTOSYSTEM I REACTION CENTER SUBUNIT IX"/>
    <property type="match status" value="1"/>
</dbReference>
<dbReference type="Pfam" id="PF01701">
    <property type="entry name" value="PSI_PsaJ"/>
    <property type="match status" value="1"/>
</dbReference>
<dbReference type="SUPFAM" id="SSF81544">
    <property type="entry name" value="Subunit IX of photosystem I reaction centre, PsaJ"/>
    <property type="match status" value="1"/>
</dbReference>
<gene>
    <name type="primary">psaJ</name>
    <name type="ordered locus">tsr2412</name>
</gene>
<feature type="chain" id="PRO_0000207824" description="Photosystem I reaction center subunit IX">
    <location>
        <begin position="1"/>
        <end position="41"/>
    </location>
</feature>
<feature type="transmembrane region" description="Helical" evidence="2">
    <location>
        <begin position="7"/>
        <end position="27"/>
    </location>
</feature>
<feature type="helix" evidence="4">
    <location>
        <begin position="2"/>
        <end position="7"/>
    </location>
</feature>
<feature type="helix" evidence="4">
    <location>
        <begin position="11"/>
        <end position="32"/>
    </location>
</feature>
<name>PSAJ_THEVB</name>
<evidence type="ECO:0000250" key="1"/>
<evidence type="ECO:0000255" key="2"/>
<evidence type="ECO:0000305" key="3"/>
<evidence type="ECO:0007829" key="4">
    <source>
        <dbReference type="PDB" id="1JB0"/>
    </source>
</evidence>
<protein>
    <recommendedName>
        <fullName>Photosystem I reaction center subunit IX</fullName>
    </recommendedName>
</protein>
<keyword id="KW-0002">3D-structure</keyword>
<keyword id="KW-0472">Membrane</keyword>
<keyword id="KW-0602">Photosynthesis</keyword>
<keyword id="KW-0603">Photosystem I</keyword>
<keyword id="KW-1185">Reference proteome</keyword>
<keyword id="KW-0793">Thylakoid</keyword>
<keyword id="KW-0812">Transmembrane</keyword>
<keyword id="KW-1133">Transmembrane helix</keyword>
<comment type="function">
    <text evidence="1">May help in the organization of the PsaE and PsaF subunits.</text>
</comment>
<comment type="subcellular location">
    <subcellularLocation>
        <location evidence="1">Cellular thylakoid membrane</location>
        <topology evidence="1">Single-pass membrane protein</topology>
    </subcellularLocation>
</comment>
<comment type="similarity">
    <text evidence="3">Belongs to the PsaJ family.</text>
</comment>
<sequence length="41" mass="4767">MKHFLTYLSTAPVLAAIWMTITAGILIEFNRFYPDLLFHPL</sequence>
<organism>
    <name type="scientific">Thermosynechococcus vestitus (strain NIES-2133 / IAM M-273 / BP-1)</name>
    <dbReference type="NCBI Taxonomy" id="197221"/>
    <lineage>
        <taxon>Bacteria</taxon>
        <taxon>Bacillati</taxon>
        <taxon>Cyanobacteriota</taxon>
        <taxon>Cyanophyceae</taxon>
        <taxon>Acaryochloridales</taxon>
        <taxon>Thermosynechococcaceae</taxon>
        <taxon>Thermosynechococcus</taxon>
    </lineage>
</organism>
<accession>P0A429</accession>
<accession>P25901</accession>
<proteinExistence type="evidence at protein level"/>
<reference key="1">
    <citation type="journal article" date="2002" name="DNA Res.">
        <title>Complete genome structure of the thermophilic cyanobacterium Thermosynechococcus elongatus BP-1.</title>
        <authorList>
            <person name="Nakamura Y."/>
            <person name="Kaneko T."/>
            <person name="Sato S."/>
            <person name="Ikeuchi M."/>
            <person name="Katoh H."/>
            <person name="Sasamoto S."/>
            <person name="Watanabe A."/>
            <person name="Iriguchi M."/>
            <person name="Kawashima K."/>
            <person name="Kimura T."/>
            <person name="Kishida Y."/>
            <person name="Kiyokawa C."/>
            <person name="Kohara M."/>
            <person name="Matsumoto M."/>
            <person name="Matsuno A."/>
            <person name="Nakazaki N."/>
            <person name="Shimpo S."/>
            <person name="Sugimoto M."/>
            <person name="Takeuchi C."/>
            <person name="Yamada M."/>
            <person name="Tabata S."/>
        </authorList>
    </citation>
    <scope>NUCLEOTIDE SEQUENCE [LARGE SCALE GENOMIC DNA]</scope>
    <source>
        <strain>NIES-2133 / IAM M-273 / BP-1</strain>
    </source>
</reference>
<reference key="2">
    <citation type="journal article" date="1996" name="Nat. Struct. Biol.">
        <title>Photosystem I at 4-A resolution represents the first structural model of a joint photosynthetic reaction centre and core antenna system.</title>
        <authorList>
            <person name="Krauss N."/>
            <person name="Schubert W.-D."/>
            <person name="Klukas O."/>
            <person name="Fromme P."/>
            <person name="Witt H.T."/>
            <person name="Saenger W."/>
        </authorList>
    </citation>
    <scope>X-RAY CRYSTALLOGRAPHY (4.0 ANGSTROMS)</scope>
</reference>
<reference key="3">
    <citation type="journal article" date="2001" name="Nature">
        <title>Three-dimensional structure of cyanobacterial photosystem I at 2.5 A resolution.</title>
        <authorList>
            <person name="Jordan P."/>
            <person name="Fromme P."/>
            <person name="Witt H.T."/>
            <person name="Klukas O."/>
            <person name="Saenger W."/>
            <person name="Krauss N."/>
        </authorList>
    </citation>
    <scope>X-RAY CRYSTALLOGRAPHY (2.5 ANGSTROMS)</scope>
</reference>